<name>FUT8_PIG</name>
<evidence type="ECO:0000250" key="1"/>
<evidence type="ECO:0000250" key="2">
    <source>
        <dbReference type="UniProtKB" id="Q9BYC5"/>
    </source>
</evidence>
<evidence type="ECO:0000250" key="3">
    <source>
        <dbReference type="UniProtKB" id="Q9WTS2"/>
    </source>
</evidence>
<evidence type="ECO:0000255" key="4"/>
<evidence type="ECO:0000255" key="5">
    <source>
        <dbReference type="PROSITE-ProRule" id="PRU00192"/>
    </source>
</evidence>
<evidence type="ECO:0000255" key="6">
    <source>
        <dbReference type="PROSITE-ProRule" id="PRU00992"/>
    </source>
</evidence>
<evidence type="ECO:0000269" key="7">
    <source>
    </source>
</evidence>
<dbReference type="EC" id="2.4.1.68"/>
<dbReference type="EMBL" id="D86723">
    <property type="protein sequence ID" value="BAA13157.1"/>
    <property type="molecule type" value="mRNA"/>
</dbReference>
<dbReference type="RefSeq" id="NP_999064.1">
    <property type="nucleotide sequence ID" value="NM_213899.1"/>
</dbReference>
<dbReference type="SMR" id="P79282"/>
<dbReference type="FunCoup" id="P79282">
    <property type="interactions" value="256"/>
</dbReference>
<dbReference type="STRING" id="9823.ENSSSCP00000002478"/>
<dbReference type="CAZy" id="GT23">
    <property type="family name" value="Glycosyltransferase Family 23"/>
</dbReference>
<dbReference type="PaxDb" id="9823-ENSSSCP00000002478"/>
<dbReference type="GeneID" id="396933"/>
<dbReference type="KEGG" id="ssc:396933"/>
<dbReference type="CTD" id="2530"/>
<dbReference type="eggNOG" id="KOG3705">
    <property type="taxonomic scope" value="Eukaryota"/>
</dbReference>
<dbReference type="InParanoid" id="P79282"/>
<dbReference type="OrthoDB" id="2014825at2759"/>
<dbReference type="BRENDA" id="2.4.1.68">
    <property type="organism ID" value="6170"/>
</dbReference>
<dbReference type="UniPathway" id="UPA00378"/>
<dbReference type="Proteomes" id="UP000008227">
    <property type="component" value="Unplaced"/>
</dbReference>
<dbReference type="Proteomes" id="UP000314985">
    <property type="component" value="Unplaced"/>
</dbReference>
<dbReference type="Proteomes" id="UP000694570">
    <property type="component" value="Unplaced"/>
</dbReference>
<dbReference type="Proteomes" id="UP000694571">
    <property type="component" value="Unplaced"/>
</dbReference>
<dbReference type="Proteomes" id="UP000694720">
    <property type="component" value="Unplaced"/>
</dbReference>
<dbReference type="Proteomes" id="UP000694722">
    <property type="component" value="Unplaced"/>
</dbReference>
<dbReference type="Proteomes" id="UP000694723">
    <property type="component" value="Unplaced"/>
</dbReference>
<dbReference type="Proteomes" id="UP000694724">
    <property type="component" value="Unplaced"/>
</dbReference>
<dbReference type="Proteomes" id="UP000694725">
    <property type="component" value="Unplaced"/>
</dbReference>
<dbReference type="Proteomes" id="UP000694726">
    <property type="component" value="Unplaced"/>
</dbReference>
<dbReference type="Proteomes" id="UP000694727">
    <property type="component" value="Unplaced"/>
</dbReference>
<dbReference type="Proteomes" id="UP000694728">
    <property type="component" value="Unplaced"/>
</dbReference>
<dbReference type="GO" id="GO:0032580">
    <property type="term" value="C:Golgi cisterna membrane"/>
    <property type="evidence" value="ECO:0007669"/>
    <property type="project" value="UniProtKB-SubCell"/>
</dbReference>
<dbReference type="GO" id="GO:0046921">
    <property type="term" value="F:alpha-(1-&gt;6)-fucosyltransferase activity"/>
    <property type="evidence" value="ECO:0000318"/>
    <property type="project" value="GO_Central"/>
</dbReference>
<dbReference type="GO" id="GO:0008424">
    <property type="term" value="F:glycoprotein 6-alpha-L-fucosyltransferase activity"/>
    <property type="evidence" value="ECO:0000250"/>
    <property type="project" value="UniProtKB"/>
</dbReference>
<dbReference type="GO" id="GO:0016757">
    <property type="term" value="F:glycosyltransferase activity"/>
    <property type="evidence" value="ECO:0000314"/>
    <property type="project" value="MGI"/>
</dbReference>
<dbReference type="GO" id="GO:0017124">
    <property type="term" value="F:SH3 domain binding"/>
    <property type="evidence" value="ECO:0007669"/>
    <property type="project" value="UniProtKB-KW"/>
</dbReference>
<dbReference type="GO" id="GO:0046368">
    <property type="term" value="P:GDP-L-fucose metabolic process"/>
    <property type="evidence" value="ECO:0000250"/>
    <property type="project" value="UniProtKB"/>
</dbReference>
<dbReference type="GO" id="GO:0036071">
    <property type="term" value="P:N-glycan fucosylation"/>
    <property type="evidence" value="ECO:0000318"/>
    <property type="project" value="GO_Central"/>
</dbReference>
<dbReference type="GO" id="GO:0006487">
    <property type="term" value="P:protein N-linked glycosylation"/>
    <property type="evidence" value="ECO:0000318"/>
    <property type="project" value="GO_Central"/>
</dbReference>
<dbReference type="GO" id="GO:0018279">
    <property type="term" value="P:protein N-linked glycosylation via asparagine"/>
    <property type="evidence" value="ECO:0000250"/>
    <property type="project" value="UniProtKB"/>
</dbReference>
<dbReference type="CDD" id="cd11300">
    <property type="entry name" value="Fut8_like"/>
    <property type="match status" value="1"/>
</dbReference>
<dbReference type="CDD" id="cd11792">
    <property type="entry name" value="SH3_Fut8"/>
    <property type="match status" value="1"/>
</dbReference>
<dbReference type="FunFam" id="1.10.287.1060:FF:000003">
    <property type="entry name" value="Alpha-(1,6)-fucosyltransferase"/>
    <property type="match status" value="1"/>
</dbReference>
<dbReference type="FunFam" id="2.30.30.40:FF:000070">
    <property type="entry name" value="Alpha-(1,6)-fucosyltransferase"/>
    <property type="match status" value="1"/>
</dbReference>
<dbReference type="FunFam" id="3.40.50.11350:FF:000001">
    <property type="entry name" value="Alpha-(1,6)-fucosyltransferase"/>
    <property type="match status" value="1"/>
</dbReference>
<dbReference type="Gene3D" id="3.40.50.11350">
    <property type="match status" value="1"/>
</dbReference>
<dbReference type="Gene3D" id="1.10.287.1060">
    <property type="entry name" value="ESAT-6-like"/>
    <property type="match status" value="1"/>
</dbReference>
<dbReference type="Gene3D" id="2.30.30.40">
    <property type="entry name" value="SH3 Domains"/>
    <property type="match status" value="1"/>
</dbReference>
<dbReference type="InterPro" id="IPR015827">
    <property type="entry name" value="Fut8"/>
</dbReference>
<dbReference type="InterPro" id="IPR045573">
    <property type="entry name" value="Fut8_N_cat"/>
</dbReference>
<dbReference type="InterPro" id="IPR035653">
    <property type="entry name" value="Fut8_SH3"/>
</dbReference>
<dbReference type="InterPro" id="IPR027350">
    <property type="entry name" value="GT23_dom"/>
</dbReference>
<dbReference type="InterPro" id="IPR036028">
    <property type="entry name" value="SH3-like_dom_sf"/>
</dbReference>
<dbReference type="InterPro" id="IPR001452">
    <property type="entry name" value="SH3_domain"/>
</dbReference>
<dbReference type="PANTHER" id="PTHR13132">
    <property type="entry name" value="ALPHA- 1,6 -FUCOSYLTRANSFERASE"/>
    <property type="match status" value="1"/>
</dbReference>
<dbReference type="PANTHER" id="PTHR13132:SF29">
    <property type="entry name" value="ALPHA-(1,6)-FUCOSYLTRANSFERASE"/>
    <property type="match status" value="1"/>
</dbReference>
<dbReference type="Pfam" id="PF19745">
    <property type="entry name" value="FUT8_N_cat"/>
    <property type="match status" value="1"/>
</dbReference>
<dbReference type="Pfam" id="PF14604">
    <property type="entry name" value="SH3_9"/>
    <property type="match status" value="1"/>
</dbReference>
<dbReference type="PIRSF" id="PIRSF000472">
    <property type="entry name" value="Alpha1_6FUT_euk"/>
    <property type="match status" value="1"/>
</dbReference>
<dbReference type="SMART" id="SM00326">
    <property type="entry name" value="SH3"/>
    <property type="match status" value="1"/>
</dbReference>
<dbReference type="SUPFAM" id="SSF50044">
    <property type="entry name" value="SH3-domain"/>
    <property type="match status" value="1"/>
</dbReference>
<dbReference type="PROSITE" id="PS51659">
    <property type="entry name" value="GT23"/>
    <property type="match status" value="1"/>
</dbReference>
<dbReference type="PROSITE" id="PS50002">
    <property type="entry name" value="SH3"/>
    <property type="match status" value="1"/>
</dbReference>
<proteinExistence type="evidence at protein level"/>
<accession>P79282</accession>
<keyword id="KW-0903">Direct protein sequencing</keyword>
<keyword id="KW-1015">Disulfide bond</keyword>
<keyword id="KW-0328">Glycosyltransferase</keyword>
<keyword id="KW-0333">Golgi apparatus</keyword>
<keyword id="KW-0472">Membrane</keyword>
<keyword id="KW-0597">Phosphoprotein</keyword>
<keyword id="KW-1185">Reference proteome</keyword>
<keyword id="KW-0728">SH3 domain</keyword>
<keyword id="KW-0729">SH3-binding</keyword>
<keyword id="KW-0735">Signal-anchor</keyword>
<keyword id="KW-0808">Transferase</keyword>
<keyword id="KW-0812">Transmembrane</keyword>
<keyword id="KW-1133">Transmembrane helix</keyword>
<sequence length="575" mass="66229">MRPWTGSWRWIMLILFAWGTLLFYIGGHLVRDNDHSDHSSRELSKILAKLERLKQQNEDLRRMAESLRIPEGPIDQGPASGRVRALEEQFMKAKEQIENYKKQTKNGPGKDHEILRRRIENGAKELWFFLQSELKKLKNLEGNELQRHADEFLSDLGHHERSIMTDLYYLSQTDGAGDWREKEAKDLTELVQRRITYLQNPKDCSKAKKLVCNINKGCGYGCQLHHVVYCFMIAYGTQRTLALESHNWRYATGGWETVFRPVSETCTDRSGSSTGHWSGEVKDKNVQVVELPIVDSVHPRPPYLPLAVPEDLADRLVRVHGDPAVWWVSQFVKYLIRPQPWLEKEIEEATKKLGFKHPVIGVHVRRTDKVGAEAAFHPIEEYTVHVEEDFQLLARRMQVDKKRVYLATDDPALLKEAKTKYPSYEFISDNSISWSAGLHNRYTENSLRGVILDIHFLSQADFLVCTFSSQVCRVAYEIMQALHPDASANFRSLDDIYYFGGPNAHNQIAIYPHQPRTEGEIPMEPGDIIGVAGNHWDGYPKGVNRKLGRTGLYPSYKVREKIETVKYPTYPEADK</sequence>
<feature type="chain" id="PRO_0000080529" description="Alpha-(1,6)-fucosyltransferase">
    <location>
        <begin position="1"/>
        <end position="575"/>
    </location>
</feature>
<feature type="topological domain" description="Cytoplasmic" evidence="4">
    <location>
        <begin position="1"/>
        <end position="9"/>
    </location>
</feature>
<feature type="transmembrane region" description="Helical; Signal-anchor for type II membrane protein" evidence="4">
    <location>
        <begin position="10"/>
        <end position="30"/>
    </location>
</feature>
<feature type="topological domain" description="Lumenal" evidence="4">
    <location>
        <begin position="31"/>
        <end position="575"/>
    </location>
</feature>
<feature type="domain" description="GT23" evidence="6">
    <location>
        <begin position="206"/>
        <end position="493"/>
    </location>
</feature>
<feature type="domain" description="SH3" evidence="5">
    <location>
        <begin position="502"/>
        <end position="563"/>
    </location>
</feature>
<feature type="region of interest" description="Important for donor substrate binding" evidence="6">
    <location>
        <begin position="365"/>
        <end position="366"/>
    </location>
</feature>
<feature type="short sequence motif" description="SH3-binding" evidence="4">
    <location>
        <begin position="299"/>
        <end position="305"/>
    </location>
</feature>
<feature type="modified residue" description="Phosphoserine" evidence="3">
    <location>
        <position position="278"/>
    </location>
</feature>
<feature type="disulfide bond" evidence="1">
    <location>
        <begin position="204"/>
        <end position="266"/>
    </location>
</feature>
<feature type="disulfide bond" evidence="1">
    <location>
        <begin position="212"/>
        <end position="230"/>
    </location>
</feature>
<feature type="disulfide bond" evidence="1">
    <location>
        <begin position="218"/>
        <end position="222"/>
    </location>
</feature>
<feature type="disulfide bond" evidence="1">
    <location>
        <begin position="465"/>
        <end position="472"/>
    </location>
</feature>
<protein>
    <recommendedName>
        <fullName>Alpha-(1,6)-fucosyltransferase</fullName>
        <shortName>Alpha1-6FucT</shortName>
        <ecNumber>2.4.1.68</ecNumber>
    </recommendedName>
    <alternativeName>
        <fullName>Fucosyltransferase 8</fullName>
    </alternativeName>
    <alternativeName>
        <fullName>GDP-L-Fuc:N-acetyl-beta-D-glucosaminide alpha1,6-fucosyltransferase</fullName>
    </alternativeName>
    <alternativeName>
        <fullName>GDP-fucose--glycoprotein fucosyltransferase</fullName>
    </alternativeName>
    <alternativeName>
        <fullName>Glycoprotein 6-alpha-L-fucosyltransferase</fullName>
    </alternativeName>
</protein>
<reference key="1">
    <citation type="journal article" date="1996" name="J. Biol. Chem.">
        <title>Purification and cDNA cloning of porcine brain GDP-L-Fuc:N-acetyl-beta-D-glucosaminide alpha1--&gt;6fucosyltransferase.</title>
        <authorList>
            <person name="Uozumi N."/>
            <person name="Yanagidani S."/>
            <person name="Miyoshi E."/>
            <person name="Ihara Y."/>
            <person name="Sakuma T."/>
            <person name="Gao C.-X."/>
            <person name="Teshima T."/>
            <person name="Fujii S."/>
            <person name="Shiba T."/>
            <person name="Taniguchi N."/>
        </authorList>
    </citation>
    <scope>NUCLEOTIDE SEQUENCE [MRNA]</scope>
    <scope>PROTEIN SEQUENCE OF 102-130; 333-344; 402-415 AND 566-575</scope>
    <scope>FUNCTION</scope>
    <source>
        <tissue>Brain</tissue>
    </source>
</reference>
<gene>
    <name type="primary">FUT8</name>
</gene>
<organism>
    <name type="scientific">Sus scrofa</name>
    <name type="common">Pig</name>
    <dbReference type="NCBI Taxonomy" id="9823"/>
    <lineage>
        <taxon>Eukaryota</taxon>
        <taxon>Metazoa</taxon>
        <taxon>Chordata</taxon>
        <taxon>Craniata</taxon>
        <taxon>Vertebrata</taxon>
        <taxon>Euteleostomi</taxon>
        <taxon>Mammalia</taxon>
        <taxon>Eutheria</taxon>
        <taxon>Laurasiatheria</taxon>
        <taxon>Artiodactyla</taxon>
        <taxon>Suina</taxon>
        <taxon>Suidae</taxon>
        <taxon>Sus</taxon>
    </lineage>
</organism>
<comment type="function">
    <text evidence="7">Catalyzes the addition of fucose in alpha 1-6 linkage to the first GlcNAc residue, next to the peptide chains in N-glycans.</text>
</comment>
<comment type="catalytic activity">
    <reaction>
        <text>N(4)-{beta-D-GlcNAc-(1-&gt;2)-alpha-D-Man-(1-&gt;3)-[beta-D-GlcNAc-(1-&gt;2)-alpha-D-Man-(1-&gt;6)]-beta-D-Man-(1-&gt;4)-beta-D-GlcNAc-(1-&gt;4)-beta-D-GlcNAc}-L-asparaginyl-[protein] + GDP-beta-L-fucose = an N(4)-{beta-D-GlcNAc-(1-&gt;2)-alpha-D-Man-(1-&gt;3)-[beta-D-GlcNAc-(1-&gt;2)-alpha-D-Man-(1-&gt;6)]-beta-D-Man-(1-&gt;4)-beta-D-GlcNAc-(1-&gt;4)-[alpha-L-Fuc-(1-&gt;6)]-beta-D-GlcNAc}-L-asparaginyl-[protein] + GDP + H(+)</text>
        <dbReference type="Rhea" id="RHEA:12985"/>
        <dbReference type="Rhea" id="RHEA-COMP:13526"/>
        <dbReference type="Rhea" id="RHEA-COMP:13532"/>
        <dbReference type="ChEBI" id="CHEBI:15378"/>
        <dbReference type="ChEBI" id="CHEBI:57273"/>
        <dbReference type="ChEBI" id="CHEBI:58189"/>
        <dbReference type="ChEBI" id="CHEBI:60651"/>
        <dbReference type="ChEBI" id="CHEBI:137207"/>
        <dbReference type="EC" id="2.4.1.68"/>
    </reaction>
</comment>
<comment type="biophysicochemical properties">
    <phDependence>
        <text>Optimum pH is 7.</text>
    </phDependence>
</comment>
<comment type="pathway">
    <text>Protein modification; protein glycosylation.</text>
</comment>
<comment type="subcellular location">
    <subcellularLocation>
        <location evidence="1">Golgi apparatus</location>
        <location evidence="1">Golgi stack membrane</location>
        <topology evidence="1">Single-pass type II membrane protein</topology>
    </subcellularLocation>
    <text evidence="1">Membrane-bound form in trans cisternae of Golgi.</text>
</comment>
<comment type="tissue specificity">
    <text>Highest expression in brain.</text>
</comment>
<comment type="PTM">
    <text evidence="2">Tyrosine phosphorylated by PKDCC/VLK.</text>
</comment>
<comment type="similarity">
    <text evidence="6">Belongs to the glycosyltransferase 23 family.</text>
</comment>